<sequence length="358" mass="40112">MITLLKGRRKVDTIKVGILGYGLSGSVFHGPLLDVLDEYQISKIMTSRTEEVKRDFPDAEVVHELEEITNDPAIELVIVTTPSGLHYEHTMACIQAGKHVVMEKPMTATAEEGETLKRAADEKGVLLSVYHNRRWDNDFLTIKKLISEGSLEDINTYQVSYNRYRPEVQARWREKEGTATGTLYDLGSHIIDQTLHLFGMPKAVTANVMAQRENAETVDYFHLTLDYGKLQAILYGGSIVPANGPRYQIHGKDSSFIKYGIDGQEDALRAGRKPEDDSWGADVPEFYGKLTTIRGSDKKTETIPSVNGSYLTYYRKIAESIREGAALPVTAEEGINVIRIIEAAMESSKEKRTIMLEH</sequence>
<protein>
    <recommendedName>
        <fullName evidence="4">scyllo-inositol 2-dehydrogenase (NADP(+)) IolW</fullName>
        <ecNumber evidence="1 3">1.1.1.371</ecNumber>
    </recommendedName>
    <alternativeName>
        <fullName evidence="5">NADP(+)-dependent scyllo-inositol dehydrogenase 1</fullName>
        <shortName evidence="5">NADP(+)-dependent SI dehydrogenase 1</shortName>
    </alternativeName>
</protein>
<reference key="1">
    <citation type="journal article" date="1997" name="Nature">
        <title>The complete genome sequence of the Gram-positive bacterium Bacillus subtilis.</title>
        <authorList>
            <person name="Kunst F."/>
            <person name="Ogasawara N."/>
            <person name="Moszer I."/>
            <person name="Albertini A.M."/>
            <person name="Alloni G."/>
            <person name="Azevedo V."/>
            <person name="Bertero M.G."/>
            <person name="Bessieres P."/>
            <person name="Bolotin A."/>
            <person name="Borchert S."/>
            <person name="Borriss R."/>
            <person name="Boursier L."/>
            <person name="Brans A."/>
            <person name="Braun M."/>
            <person name="Brignell S.C."/>
            <person name="Bron S."/>
            <person name="Brouillet S."/>
            <person name="Bruschi C.V."/>
            <person name="Caldwell B."/>
            <person name="Capuano V."/>
            <person name="Carter N.M."/>
            <person name="Choi S.-K."/>
            <person name="Codani J.-J."/>
            <person name="Connerton I.F."/>
            <person name="Cummings N.J."/>
            <person name="Daniel R.A."/>
            <person name="Denizot F."/>
            <person name="Devine K.M."/>
            <person name="Duesterhoeft A."/>
            <person name="Ehrlich S.D."/>
            <person name="Emmerson P.T."/>
            <person name="Entian K.-D."/>
            <person name="Errington J."/>
            <person name="Fabret C."/>
            <person name="Ferrari E."/>
            <person name="Foulger D."/>
            <person name="Fritz C."/>
            <person name="Fujita M."/>
            <person name="Fujita Y."/>
            <person name="Fuma S."/>
            <person name="Galizzi A."/>
            <person name="Galleron N."/>
            <person name="Ghim S.-Y."/>
            <person name="Glaser P."/>
            <person name="Goffeau A."/>
            <person name="Golightly E.J."/>
            <person name="Grandi G."/>
            <person name="Guiseppi G."/>
            <person name="Guy B.J."/>
            <person name="Haga K."/>
            <person name="Haiech J."/>
            <person name="Harwood C.R."/>
            <person name="Henaut A."/>
            <person name="Hilbert H."/>
            <person name="Holsappel S."/>
            <person name="Hosono S."/>
            <person name="Hullo M.-F."/>
            <person name="Itaya M."/>
            <person name="Jones L.-M."/>
            <person name="Joris B."/>
            <person name="Karamata D."/>
            <person name="Kasahara Y."/>
            <person name="Klaerr-Blanchard M."/>
            <person name="Klein C."/>
            <person name="Kobayashi Y."/>
            <person name="Koetter P."/>
            <person name="Koningstein G."/>
            <person name="Krogh S."/>
            <person name="Kumano M."/>
            <person name="Kurita K."/>
            <person name="Lapidus A."/>
            <person name="Lardinois S."/>
            <person name="Lauber J."/>
            <person name="Lazarevic V."/>
            <person name="Lee S.-M."/>
            <person name="Levine A."/>
            <person name="Liu H."/>
            <person name="Masuda S."/>
            <person name="Mauel C."/>
            <person name="Medigue C."/>
            <person name="Medina N."/>
            <person name="Mellado R.P."/>
            <person name="Mizuno M."/>
            <person name="Moestl D."/>
            <person name="Nakai S."/>
            <person name="Noback M."/>
            <person name="Noone D."/>
            <person name="O'Reilly M."/>
            <person name="Ogawa K."/>
            <person name="Ogiwara A."/>
            <person name="Oudega B."/>
            <person name="Park S.-H."/>
            <person name="Parro V."/>
            <person name="Pohl T.M."/>
            <person name="Portetelle D."/>
            <person name="Porwollik S."/>
            <person name="Prescott A.M."/>
            <person name="Presecan E."/>
            <person name="Pujic P."/>
            <person name="Purnelle B."/>
            <person name="Rapoport G."/>
            <person name="Rey M."/>
            <person name="Reynolds S."/>
            <person name="Rieger M."/>
            <person name="Rivolta C."/>
            <person name="Rocha E."/>
            <person name="Roche B."/>
            <person name="Rose M."/>
            <person name="Sadaie Y."/>
            <person name="Sato T."/>
            <person name="Scanlan E."/>
            <person name="Schleich S."/>
            <person name="Schroeter R."/>
            <person name="Scoffone F."/>
            <person name="Sekiguchi J."/>
            <person name="Sekowska A."/>
            <person name="Seror S.J."/>
            <person name="Serror P."/>
            <person name="Shin B.-S."/>
            <person name="Soldo B."/>
            <person name="Sorokin A."/>
            <person name="Tacconi E."/>
            <person name="Takagi T."/>
            <person name="Takahashi H."/>
            <person name="Takemaru K."/>
            <person name="Takeuchi M."/>
            <person name="Tamakoshi A."/>
            <person name="Tanaka T."/>
            <person name="Terpstra P."/>
            <person name="Tognoni A."/>
            <person name="Tosato V."/>
            <person name="Uchiyama S."/>
            <person name="Vandenbol M."/>
            <person name="Vannier F."/>
            <person name="Vassarotti A."/>
            <person name="Viari A."/>
            <person name="Wambutt R."/>
            <person name="Wedler E."/>
            <person name="Wedler H."/>
            <person name="Weitzenegger T."/>
            <person name="Winters P."/>
            <person name="Wipat A."/>
            <person name="Yamamoto H."/>
            <person name="Yamane K."/>
            <person name="Yasumoto K."/>
            <person name="Yata K."/>
            <person name="Yoshida K."/>
            <person name="Yoshikawa H.-F."/>
            <person name="Zumstein E."/>
            <person name="Yoshikawa H."/>
            <person name="Danchin A."/>
        </authorList>
    </citation>
    <scope>NUCLEOTIDE SEQUENCE [LARGE SCALE GENOMIC DNA]</scope>
    <source>
        <strain>168</strain>
    </source>
</reference>
<reference key="2">
    <citation type="journal article" date="2010" name="Microbiology">
        <title>Identification of two scyllo-inositol dehydrogenases in Bacillus subtilis.</title>
        <authorList>
            <person name="Morinaga T."/>
            <person name="Ashida H."/>
            <person name="Yoshida K."/>
        </authorList>
    </citation>
    <scope>FUNCTION</scope>
    <scope>CATALYTIC ACTIVITY</scope>
    <scope>SUBSTRATE SPECIFICITY</scope>
    <scope>BIOPHYSICOCHEMICAL PROPERTIES</scope>
    <scope>INDUCTION</scope>
    <scope>DISRUPTION PHENOTYPE</scope>
    <source>
        <strain>168 / 60015</strain>
    </source>
</reference>
<reference key="3">
    <citation type="journal article" date="2012" name="Science">
        <title>Condition-dependent transcriptome reveals high-level regulatory architecture in Bacillus subtilis.</title>
        <authorList>
            <person name="Nicolas P."/>
            <person name="Maeder U."/>
            <person name="Dervyn E."/>
            <person name="Rochat T."/>
            <person name="Leduc A."/>
            <person name="Pigeonneau N."/>
            <person name="Bidnenko E."/>
            <person name="Marchadier E."/>
            <person name="Hoebeke M."/>
            <person name="Aymerich S."/>
            <person name="Becher D."/>
            <person name="Bisicchia P."/>
            <person name="Botella E."/>
            <person name="Delumeau O."/>
            <person name="Doherty G."/>
            <person name="Denham E.L."/>
            <person name="Fogg M.J."/>
            <person name="Fromion V."/>
            <person name="Goelzer A."/>
            <person name="Hansen A."/>
            <person name="Haertig E."/>
            <person name="Harwood C.R."/>
            <person name="Homuth G."/>
            <person name="Jarmer H."/>
            <person name="Jules M."/>
            <person name="Klipp E."/>
            <person name="Le Chat L."/>
            <person name="Lecointe F."/>
            <person name="Lewis P."/>
            <person name="Liebermeister W."/>
            <person name="March A."/>
            <person name="Mars R.A."/>
            <person name="Nannapaneni P."/>
            <person name="Noone D."/>
            <person name="Pohl S."/>
            <person name="Rinn B."/>
            <person name="Ruegheimer F."/>
            <person name="Sappa P.K."/>
            <person name="Samson F."/>
            <person name="Schaffer M."/>
            <person name="Schwikowski B."/>
            <person name="Steil L."/>
            <person name="Stuelke J."/>
            <person name="Wiegert T."/>
            <person name="Devine K.M."/>
            <person name="Wilkinson A.J."/>
            <person name="van Dijl J.M."/>
            <person name="Hecker M."/>
            <person name="Voelker U."/>
            <person name="Bessieres P."/>
            <person name="Noirot P."/>
        </authorList>
    </citation>
    <scope>INDUCTION</scope>
</reference>
<reference key="4">
    <citation type="journal article" date="2017" name="Biosci. Biotechnol. Biochem.">
        <title>Bacillus subtilis iolU encodes an additional NADP(+)-dependent scyllo-inositol dehydrogenase.</title>
        <authorList>
            <person name="Kang D.M."/>
            <person name="Tanaka K."/>
            <person name="Takenaka S."/>
            <person name="Ishikawa S."/>
            <person name="Yoshida K.I."/>
        </authorList>
    </citation>
    <scope>FUNCTION</scope>
    <scope>CATALYTIC ACTIVITY</scope>
    <scope>SUBSTRATE SPECIFICITY</scope>
    <source>
        <strain>168</strain>
    </source>
</reference>
<reference key="5">
    <citation type="submission" date="2011-07" db="PDB data bank">
        <title>Structure of putative oxidoreductase YvaA from Bacillus subtilis.</title>
        <authorList>
            <consortium name="New York structural genomix research consortium (NYSGXRC)"/>
        </authorList>
    </citation>
    <scope>X-RAY CRYSTALLOGRAPHY (2.03 ANGSTROMS) OF 3-358</scope>
</reference>
<dbReference type="EC" id="1.1.1.371" evidence="1 3"/>
<dbReference type="EMBL" id="AL009126">
    <property type="protein sequence ID" value="CAB15358.1"/>
    <property type="molecule type" value="Genomic_DNA"/>
</dbReference>
<dbReference type="PIR" id="G70026">
    <property type="entry name" value="G70026"/>
</dbReference>
<dbReference type="RefSeq" id="NP_391233.1">
    <property type="nucleotide sequence ID" value="NC_000964.3"/>
</dbReference>
<dbReference type="RefSeq" id="WP_009968169.1">
    <property type="nucleotide sequence ID" value="NZ_OZ025638.1"/>
</dbReference>
<dbReference type="PDB" id="3GDO">
    <property type="method" value="X-ray"/>
    <property type="resolution" value="2.03 A"/>
    <property type="chains" value="A/B=12-358"/>
</dbReference>
<dbReference type="PDB" id="3GFG">
    <property type="method" value="X-ray"/>
    <property type="resolution" value="2.59 A"/>
    <property type="chains" value="A/B/C/D/E/F/G/H/I/J/K/L=3-358"/>
</dbReference>
<dbReference type="PDBsum" id="3GDO"/>
<dbReference type="PDBsum" id="3GFG"/>
<dbReference type="SMR" id="O32223"/>
<dbReference type="FunCoup" id="O32223">
    <property type="interactions" value="163"/>
</dbReference>
<dbReference type="STRING" id="224308.BSU33530"/>
<dbReference type="PaxDb" id="224308-BSU33530"/>
<dbReference type="DNASU" id="936109"/>
<dbReference type="EnsemblBacteria" id="CAB15358">
    <property type="protein sequence ID" value="CAB15358"/>
    <property type="gene ID" value="BSU_33530"/>
</dbReference>
<dbReference type="GeneID" id="936109"/>
<dbReference type="KEGG" id="bsu:BSU33530"/>
<dbReference type="PATRIC" id="fig|224308.179.peg.3638"/>
<dbReference type="eggNOG" id="COG0673">
    <property type="taxonomic scope" value="Bacteria"/>
</dbReference>
<dbReference type="InParanoid" id="O32223"/>
<dbReference type="OrthoDB" id="9815825at2"/>
<dbReference type="PhylomeDB" id="O32223"/>
<dbReference type="BioCyc" id="BSUB:BSU33530-MONOMER"/>
<dbReference type="BioCyc" id="MetaCyc:BSU33530-MONOMER"/>
<dbReference type="BRENDA" id="1.1.1.371">
    <property type="organism ID" value="658"/>
</dbReference>
<dbReference type="EvolutionaryTrace" id="O32223"/>
<dbReference type="Proteomes" id="UP000001570">
    <property type="component" value="Chromosome"/>
</dbReference>
<dbReference type="GO" id="GO:0005829">
    <property type="term" value="C:cytosol"/>
    <property type="evidence" value="ECO:0000318"/>
    <property type="project" value="GO_Central"/>
</dbReference>
<dbReference type="GO" id="GO:0070401">
    <property type="term" value="F:NADP+ binding"/>
    <property type="evidence" value="ECO:0000314"/>
    <property type="project" value="UniProtKB"/>
</dbReference>
<dbReference type="GO" id="GO:0070402">
    <property type="term" value="F:NADPH binding"/>
    <property type="evidence" value="ECO:0000314"/>
    <property type="project" value="UniProtKB"/>
</dbReference>
<dbReference type="GO" id="GO:0102497">
    <property type="term" value="F:scyllo-inositol dehydrogenase (NADP+) activity"/>
    <property type="evidence" value="ECO:0000314"/>
    <property type="project" value="UniProtKB"/>
</dbReference>
<dbReference type="GO" id="GO:0017000">
    <property type="term" value="P:antibiotic biosynthetic process"/>
    <property type="evidence" value="ECO:0000318"/>
    <property type="project" value="GO_Central"/>
</dbReference>
<dbReference type="FunFam" id="3.40.50.720:FF:000228">
    <property type="entry name" value="Putative oxidoreductase yhhX"/>
    <property type="match status" value="1"/>
</dbReference>
<dbReference type="Gene3D" id="3.30.360.10">
    <property type="entry name" value="Dihydrodipicolinate Reductase, domain 2"/>
    <property type="match status" value="1"/>
</dbReference>
<dbReference type="Gene3D" id="3.40.50.720">
    <property type="entry name" value="NAD(P)-binding Rossmann-like Domain"/>
    <property type="match status" value="1"/>
</dbReference>
<dbReference type="InterPro" id="IPR004104">
    <property type="entry name" value="Gfo/Idh/MocA-like_OxRdtase_C"/>
</dbReference>
<dbReference type="InterPro" id="IPR000683">
    <property type="entry name" value="Gfo/Idh/MocA-like_OxRdtase_N"/>
</dbReference>
<dbReference type="InterPro" id="IPR051317">
    <property type="entry name" value="Gfo/Idh/MocA_oxidoreduct"/>
</dbReference>
<dbReference type="InterPro" id="IPR036291">
    <property type="entry name" value="NAD(P)-bd_dom_sf"/>
</dbReference>
<dbReference type="NCBIfam" id="NF008607">
    <property type="entry name" value="PRK11579.1"/>
    <property type="match status" value="1"/>
</dbReference>
<dbReference type="PANTHER" id="PTHR43708">
    <property type="entry name" value="CONSERVED EXPRESSED OXIDOREDUCTASE (EUROFUNG)"/>
    <property type="match status" value="1"/>
</dbReference>
<dbReference type="PANTHER" id="PTHR43708:SF5">
    <property type="entry name" value="CONSERVED EXPRESSED OXIDOREDUCTASE (EUROFUNG)-RELATED"/>
    <property type="match status" value="1"/>
</dbReference>
<dbReference type="Pfam" id="PF01408">
    <property type="entry name" value="GFO_IDH_MocA"/>
    <property type="match status" value="1"/>
</dbReference>
<dbReference type="Pfam" id="PF02894">
    <property type="entry name" value="GFO_IDH_MocA_C"/>
    <property type="match status" value="1"/>
</dbReference>
<dbReference type="SUPFAM" id="SSF51735">
    <property type="entry name" value="NAD(P)-binding Rossmann-fold domains"/>
    <property type="match status" value="1"/>
</dbReference>
<gene>
    <name evidence="4" type="primary">iolW</name>
    <name type="synonym">yvaA</name>
    <name type="ordered locus">BSU33530</name>
</gene>
<feature type="chain" id="PRO_0000049934" description="scyllo-inositol 2-dehydrogenase (NADP(+)) IolW">
    <location>
        <begin position="1"/>
        <end position="358"/>
    </location>
</feature>
<feature type="strand" evidence="7">
    <location>
        <begin position="14"/>
        <end position="19"/>
    </location>
</feature>
<feature type="helix" evidence="7">
    <location>
        <begin position="23"/>
        <end position="27"/>
    </location>
</feature>
<feature type="helix" evidence="7">
    <location>
        <begin position="30"/>
        <end position="33"/>
    </location>
</feature>
<feature type="strand" evidence="7">
    <location>
        <begin position="39"/>
        <end position="45"/>
    </location>
</feature>
<feature type="helix" evidence="7">
    <location>
        <begin position="49"/>
        <end position="55"/>
    </location>
</feature>
<feature type="strand" evidence="7">
    <location>
        <begin position="59"/>
        <end position="64"/>
    </location>
</feature>
<feature type="helix" evidence="7">
    <location>
        <begin position="66"/>
        <end position="69"/>
    </location>
</feature>
<feature type="strand" evidence="7">
    <location>
        <begin position="76"/>
        <end position="79"/>
    </location>
</feature>
<feature type="turn" evidence="7">
    <location>
        <begin position="83"/>
        <end position="85"/>
    </location>
</feature>
<feature type="helix" evidence="7">
    <location>
        <begin position="86"/>
        <end position="95"/>
    </location>
</feature>
<feature type="strand" evidence="7">
    <location>
        <begin position="99"/>
        <end position="105"/>
    </location>
</feature>
<feature type="helix" evidence="7">
    <location>
        <begin position="110"/>
        <end position="123"/>
    </location>
</feature>
<feature type="strand" evidence="7">
    <location>
        <begin position="127"/>
        <end position="130"/>
    </location>
</feature>
<feature type="helix" evidence="7">
    <location>
        <begin position="132"/>
        <end position="135"/>
    </location>
</feature>
<feature type="helix" evidence="7">
    <location>
        <begin position="137"/>
        <end position="147"/>
    </location>
</feature>
<feature type="strand" evidence="7">
    <location>
        <begin position="156"/>
        <end position="160"/>
    </location>
</feature>
<feature type="helix" evidence="8">
    <location>
        <begin position="171"/>
        <end position="175"/>
    </location>
</feature>
<feature type="helix" evidence="7">
    <location>
        <begin position="182"/>
        <end position="185"/>
    </location>
</feature>
<feature type="helix" evidence="7">
    <location>
        <begin position="187"/>
        <end position="198"/>
    </location>
</feature>
<feature type="strand" evidence="7">
    <location>
        <begin position="202"/>
        <end position="209"/>
    </location>
</feature>
<feature type="strand" evidence="7">
    <location>
        <begin position="220"/>
        <end position="227"/>
    </location>
</feature>
<feature type="strand" evidence="7">
    <location>
        <begin position="230"/>
        <end position="236"/>
    </location>
</feature>
<feature type="strand" evidence="7">
    <location>
        <begin position="246"/>
        <end position="250"/>
    </location>
</feature>
<feature type="strand" evidence="7">
    <location>
        <begin position="252"/>
        <end position="258"/>
    </location>
</feature>
<feature type="helix" evidence="7">
    <location>
        <begin position="264"/>
        <end position="269"/>
    </location>
</feature>
<feature type="turn" evidence="7">
    <location>
        <begin position="277"/>
        <end position="280"/>
    </location>
</feature>
<feature type="helix" evidence="7">
    <location>
        <begin position="284"/>
        <end position="286"/>
    </location>
</feature>
<feature type="strand" evidence="7">
    <location>
        <begin position="288"/>
        <end position="294"/>
    </location>
</feature>
<feature type="strand" evidence="7">
    <location>
        <begin position="297"/>
        <end position="303"/>
    </location>
</feature>
<feature type="helix" evidence="7">
    <location>
        <begin position="311"/>
        <end position="323"/>
    </location>
</feature>
<feature type="helix" evidence="7">
    <location>
        <begin position="331"/>
        <end position="350"/>
    </location>
</feature>
<evidence type="ECO:0000269" key="1">
    <source>
    </source>
</evidence>
<evidence type="ECO:0000269" key="2">
    <source>
    </source>
</evidence>
<evidence type="ECO:0000269" key="3">
    <source>
    </source>
</evidence>
<evidence type="ECO:0000303" key="4">
    <source>
    </source>
</evidence>
<evidence type="ECO:0000303" key="5">
    <source>
    </source>
</evidence>
<evidence type="ECO:0000305" key="6"/>
<evidence type="ECO:0007829" key="7">
    <source>
        <dbReference type="PDB" id="3GDO"/>
    </source>
</evidence>
<evidence type="ECO:0007829" key="8">
    <source>
        <dbReference type="PDB" id="3GFG"/>
    </source>
</evidence>
<comment type="function">
    <text evidence="1 3">Catalyzes the reversible NADPH-dependent reduction of scyllo-inosose (SIS) to scyllo-inositol (SI). Cannot use NADH instead of NADPH. May be involved in reduction of not only SIS but also various oxidized compounds manifested upon stressful conditions.</text>
</comment>
<comment type="catalytic activity">
    <reaction evidence="1 3">
        <text>scyllo-inositol + NADP(+) = scyllo-inosose + NADPH + H(+)</text>
        <dbReference type="Rhea" id="RHEA:39063"/>
        <dbReference type="ChEBI" id="CHEBI:10642"/>
        <dbReference type="ChEBI" id="CHEBI:15378"/>
        <dbReference type="ChEBI" id="CHEBI:17811"/>
        <dbReference type="ChEBI" id="CHEBI:57783"/>
        <dbReference type="ChEBI" id="CHEBI:58349"/>
        <dbReference type="EC" id="1.1.1.371"/>
    </reaction>
</comment>
<comment type="biophysicochemical properties">
    <kinetics>
        <KM evidence="1">34.3 mM for scyllo-inositol</KM>
        <KM evidence="1">1.68 mM for scyllo-inosose</KM>
        <KM evidence="1">0.096 mM for NADP(+)</KM>
        <KM evidence="1">0.027 mM for NADPH</KM>
        <Vmax evidence="1">3.46 umol/min/mg enzyme toward scyllo-inositol</Vmax>
        <Vmax evidence="1">127.1 umol/min/mg enzyme toward scyllo-inosose</Vmax>
        <Vmax evidence="1">3.43 umol/min/mg enzyme toward NADP(+)</Vmax>
        <Vmax evidence="1">109.1 umol/min/mg enzyme toward NADPH</Vmax>
    </kinetics>
</comment>
<comment type="induction">
    <text evidence="1 2">Is constitutively expressed, even in the absence of both myo-inositol and scillo-inositol (PubMed:20133360). Is up-regulated under certain stressful conditions (PubMed:22383849).</text>
</comment>
<comment type="disruption phenotype">
    <text evidence="1">Cells lacking this gene show normal growth on SI as well as on glucose or myo-inositol (MI) as the sole carbon source.</text>
</comment>
<comment type="similarity">
    <text evidence="6">Belongs to the Gfo/Idh/MocA family.</text>
</comment>
<keyword id="KW-0002">3D-structure</keyword>
<keyword id="KW-0521">NADP</keyword>
<keyword id="KW-0560">Oxidoreductase</keyword>
<keyword id="KW-1185">Reference proteome</keyword>
<accession>O32223</accession>
<proteinExistence type="evidence at protein level"/>
<name>IOLW_BACSU</name>
<organism>
    <name type="scientific">Bacillus subtilis (strain 168)</name>
    <dbReference type="NCBI Taxonomy" id="224308"/>
    <lineage>
        <taxon>Bacteria</taxon>
        <taxon>Bacillati</taxon>
        <taxon>Bacillota</taxon>
        <taxon>Bacilli</taxon>
        <taxon>Bacillales</taxon>
        <taxon>Bacillaceae</taxon>
        <taxon>Bacillus</taxon>
    </lineage>
</organism>